<name>RPOZ_CHRVO</name>
<protein>
    <recommendedName>
        <fullName evidence="1">DNA-directed RNA polymerase subunit omega</fullName>
        <shortName evidence="1">RNAP omega subunit</shortName>
        <ecNumber evidence="1">2.7.7.6</ecNumber>
    </recommendedName>
    <alternativeName>
        <fullName evidence="1">RNA polymerase omega subunit</fullName>
    </alternativeName>
    <alternativeName>
        <fullName evidence="1">Transcriptase subunit omega</fullName>
    </alternativeName>
</protein>
<sequence>MARITVDDCLDRIQNRFDLTLAAAYRARQVASGASAFVEPGRHKPTVIALREIAAGHVGKEVLNRGKA</sequence>
<accession>Q7NRL2</accession>
<proteinExistence type="inferred from homology"/>
<feature type="chain" id="PRO_0000128926" description="DNA-directed RNA polymerase subunit omega">
    <location>
        <begin position="1"/>
        <end position="68"/>
    </location>
</feature>
<dbReference type="EC" id="2.7.7.6" evidence="1"/>
<dbReference type="EMBL" id="AE016825">
    <property type="protein sequence ID" value="AAQ61431.1"/>
    <property type="molecule type" value="Genomic_DNA"/>
</dbReference>
<dbReference type="RefSeq" id="WP_011137316.1">
    <property type="nucleotide sequence ID" value="NC_005085.1"/>
</dbReference>
<dbReference type="SMR" id="Q7NRL2"/>
<dbReference type="STRING" id="243365.CV_3769"/>
<dbReference type="GeneID" id="66365002"/>
<dbReference type="KEGG" id="cvi:CV_3769"/>
<dbReference type="eggNOG" id="COG1758">
    <property type="taxonomic scope" value="Bacteria"/>
</dbReference>
<dbReference type="HOGENOM" id="CLU_125406_5_1_4"/>
<dbReference type="OrthoDB" id="9796300at2"/>
<dbReference type="Proteomes" id="UP000001424">
    <property type="component" value="Chromosome"/>
</dbReference>
<dbReference type="GO" id="GO:0000428">
    <property type="term" value="C:DNA-directed RNA polymerase complex"/>
    <property type="evidence" value="ECO:0007669"/>
    <property type="project" value="UniProtKB-KW"/>
</dbReference>
<dbReference type="GO" id="GO:0003677">
    <property type="term" value="F:DNA binding"/>
    <property type="evidence" value="ECO:0007669"/>
    <property type="project" value="UniProtKB-UniRule"/>
</dbReference>
<dbReference type="GO" id="GO:0003899">
    <property type="term" value="F:DNA-directed RNA polymerase activity"/>
    <property type="evidence" value="ECO:0007669"/>
    <property type="project" value="UniProtKB-UniRule"/>
</dbReference>
<dbReference type="GO" id="GO:0006351">
    <property type="term" value="P:DNA-templated transcription"/>
    <property type="evidence" value="ECO:0007669"/>
    <property type="project" value="UniProtKB-UniRule"/>
</dbReference>
<dbReference type="Gene3D" id="3.90.940.10">
    <property type="match status" value="1"/>
</dbReference>
<dbReference type="HAMAP" id="MF_00366">
    <property type="entry name" value="RNApol_bact_RpoZ"/>
    <property type="match status" value="1"/>
</dbReference>
<dbReference type="InterPro" id="IPR003716">
    <property type="entry name" value="DNA-dir_RNA_pol_omega"/>
</dbReference>
<dbReference type="InterPro" id="IPR006110">
    <property type="entry name" value="Pol_omega/Rpo6/RPB6"/>
</dbReference>
<dbReference type="InterPro" id="IPR036161">
    <property type="entry name" value="RPB6/omega-like_sf"/>
</dbReference>
<dbReference type="NCBIfam" id="TIGR00690">
    <property type="entry name" value="rpoZ"/>
    <property type="match status" value="1"/>
</dbReference>
<dbReference type="PANTHER" id="PTHR34476">
    <property type="entry name" value="DNA-DIRECTED RNA POLYMERASE SUBUNIT OMEGA"/>
    <property type="match status" value="1"/>
</dbReference>
<dbReference type="PANTHER" id="PTHR34476:SF1">
    <property type="entry name" value="DNA-DIRECTED RNA POLYMERASE SUBUNIT OMEGA"/>
    <property type="match status" value="1"/>
</dbReference>
<dbReference type="Pfam" id="PF01192">
    <property type="entry name" value="RNA_pol_Rpb6"/>
    <property type="match status" value="1"/>
</dbReference>
<dbReference type="SMART" id="SM01409">
    <property type="entry name" value="RNA_pol_Rpb6"/>
    <property type="match status" value="1"/>
</dbReference>
<dbReference type="SUPFAM" id="SSF63562">
    <property type="entry name" value="RPB6/omega subunit-like"/>
    <property type="match status" value="1"/>
</dbReference>
<gene>
    <name evidence="1" type="primary">rpoZ</name>
    <name type="ordered locus">CV_3769</name>
</gene>
<keyword id="KW-0240">DNA-directed RNA polymerase</keyword>
<keyword id="KW-0548">Nucleotidyltransferase</keyword>
<keyword id="KW-1185">Reference proteome</keyword>
<keyword id="KW-0804">Transcription</keyword>
<keyword id="KW-0808">Transferase</keyword>
<reference key="1">
    <citation type="journal article" date="2003" name="Proc. Natl. Acad. Sci. U.S.A.">
        <title>The complete genome sequence of Chromobacterium violaceum reveals remarkable and exploitable bacterial adaptability.</title>
        <authorList>
            <person name="Vasconcelos A.T.R."/>
            <person name="de Almeida D.F."/>
            <person name="Hungria M."/>
            <person name="Guimaraes C.T."/>
            <person name="Antonio R.V."/>
            <person name="Almeida F.C."/>
            <person name="de Almeida L.G.P."/>
            <person name="de Almeida R."/>
            <person name="Alves-Gomes J.A."/>
            <person name="Andrade E.M."/>
            <person name="Araripe J."/>
            <person name="de Araujo M.F.F."/>
            <person name="Astolfi-Filho S."/>
            <person name="Azevedo V."/>
            <person name="Baptista A.J."/>
            <person name="Bataus L.A.M."/>
            <person name="Batista J.S."/>
            <person name="Belo A."/>
            <person name="van den Berg C."/>
            <person name="Bogo M."/>
            <person name="Bonatto S."/>
            <person name="Bordignon J."/>
            <person name="Brigido M.M."/>
            <person name="Brito C.A."/>
            <person name="Brocchi M."/>
            <person name="Burity H.A."/>
            <person name="Camargo A.A."/>
            <person name="Cardoso D.D.P."/>
            <person name="Carneiro N.P."/>
            <person name="Carraro D.M."/>
            <person name="Carvalho C.M.B."/>
            <person name="Cascardo J.C.M."/>
            <person name="Cavada B.S."/>
            <person name="Chueire L.M.O."/>
            <person name="Creczynski-Pasa T.B."/>
            <person name="Cunha-Junior N.C."/>
            <person name="Fagundes N."/>
            <person name="Falcao C.L."/>
            <person name="Fantinatti F."/>
            <person name="Farias I.P."/>
            <person name="Felipe M.S.S."/>
            <person name="Ferrari L.P."/>
            <person name="Ferro J.A."/>
            <person name="Ferro M.I.T."/>
            <person name="Franco G.R."/>
            <person name="Freitas N.S.A."/>
            <person name="Furlan L.R."/>
            <person name="Gazzinelli R.T."/>
            <person name="Gomes E.A."/>
            <person name="Goncalves P.R."/>
            <person name="Grangeiro T.B."/>
            <person name="Grattapaglia D."/>
            <person name="Grisard E.C."/>
            <person name="Hanna E.S."/>
            <person name="Jardim S.N."/>
            <person name="Laurino J."/>
            <person name="Leoi L.C.T."/>
            <person name="Lima L.F.A."/>
            <person name="Loureiro M.F."/>
            <person name="Lyra M.C.C.P."/>
            <person name="Madeira H.M.F."/>
            <person name="Manfio G.P."/>
            <person name="Maranhao A.Q."/>
            <person name="Martins W.S."/>
            <person name="di Mauro S.M.Z."/>
            <person name="de Medeiros S.R.B."/>
            <person name="Meissner R.V."/>
            <person name="Moreira M.A.M."/>
            <person name="Nascimento F.F."/>
            <person name="Nicolas M.F."/>
            <person name="Oliveira J.G."/>
            <person name="Oliveira S.C."/>
            <person name="Paixao R.F.C."/>
            <person name="Parente J.A."/>
            <person name="Pedrosa F.O."/>
            <person name="Pena S.D.J."/>
            <person name="Pereira J.O."/>
            <person name="Pereira M."/>
            <person name="Pinto L.S.R.C."/>
            <person name="Pinto L.S."/>
            <person name="Porto J.I.R."/>
            <person name="Potrich D.P."/>
            <person name="Ramalho-Neto C.E."/>
            <person name="Reis A.M.M."/>
            <person name="Rigo L.U."/>
            <person name="Rondinelli E."/>
            <person name="Santos E.B.P."/>
            <person name="Santos F.R."/>
            <person name="Schneider M.P.C."/>
            <person name="Seuanez H.N."/>
            <person name="Silva A.M.R."/>
            <person name="da Silva A.L.C."/>
            <person name="Silva D.W."/>
            <person name="Silva R."/>
            <person name="Simoes I.C."/>
            <person name="Simon D."/>
            <person name="Soares C.M.A."/>
            <person name="Soares R.B.A."/>
            <person name="Souza E.M."/>
            <person name="Souza K.R.L."/>
            <person name="Souza R.C."/>
            <person name="Steffens M.B.R."/>
            <person name="Steindel M."/>
            <person name="Teixeira S.R."/>
            <person name="Urmenyi T."/>
            <person name="Vettore A."/>
            <person name="Wassem R."/>
            <person name="Zaha A."/>
            <person name="Simpson A.J.G."/>
        </authorList>
    </citation>
    <scope>NUCLEOTIDE SEQUENCE [LARGE SCALE GENOMIC DNA]</scope>
    <source>
        <strain>ATCC 12472 / DSM 30191 / JCM 1249 / CCUG 213 / NBRC 12614 / NCIMB 9131 / NCTC 9757 / MK</strain>
    </source>
</reference>
<comment type="function">
    <text evidence="1">Promotes RNA polymerase assembly. Latches the N- and C-terminal regions of the beta' subunit thereby facilitating its interaction with the beta and alpha subunits.</text>
</comment>
<comment type="catalytic activity">
    <reaction evidence="1">
        <text>RNA(n) + a ribonucleoside 5'-triphosphate = RNA(n+1) + diphosphate</text>
        <dbReference type="Rhea" id="RHEA:21248"/>
        <dbReference type="Rhea" id="RHEA-COMP:14527"/>
        <dbReference type="Rhea" id="RHEA-COMP:17342"/>
        <dbReference type="ChEBI" id="CHEBI:33019"/>
        <dbReference type="ChEBI" id="CHEBI:61557"/>
        <dbReference type="ChEBI" id="CHEBI:140395"/>
        <dbReference type="EC" id="2.7.7.6"/>
    </reaction>
</comment>
<comment type="subunit">
    <text evidence="1">The RNAP catalytic core consists of 2 alpha, 1 beta, 1 beta' and 1 omega subunit. When a sigma factor is associated with the core the holoenzyme is formed, which can initiate transcription.</text>
</comment>
<comment type="similarity">
    <text evidence="1">Belongs to the RNA polymerase subunit omega family.</text>
</comment>
<organism>
    <name type="scientific">Chromobacterium violaceum (strain ATCC 12472 / DSM 30191 / JCM 1249 / CCUG 213 / NBRC 12614 / NCIMB 9131 / NCTC 9757 / MK)</name>
    <dbReference type="NCBI Taxonomy" id="243365"/>
    <lineage>
        <taxon>Bacteria</taxon>
        <taxon>Pseudomonadati</taxon>
        <taxon>Pseudomonadota</taxon>
        <taxon>Betaproteobacteria</taxon>
        <taxon>Neisseriales</taxon>
        <taxon>Chromobacteriaceae</taxon>
        <taxon>Chromobacterium</taxon>
    </lineage>
</organism>
<evidence type="ECO:0000255" key="1">
    <source>
        <dbReference type="HAMAP-Rule" id="MF_00366"/>
    </source>
</evidence>